<proteinExistence type="inferred from homology"/>
<comment type="function">
    <text evidence="1">NDH-1 shuttles electrons from NADH, via FMN and iron-sulfur (Fe-S) centers, to quinones in the respiratory chain. The immediate electron acceptor for the enzyme in this species is believed to be menaquinone. Couples the redox reaction to proton translocation (for every two electrons transferred, four hydrogen ions are translocated across the cytoplasmic membrane), and thus conserves the redox energy in a proton gradient.</text>
</comment>
<comment type="catalytic activity">
    <reaction evidence="1">
        <text>a quinone + NADH + 5 H(+)(in) = a quinol + NAD(+) + 4 H(+)(out)</text>
        <dbReference type="Rhea" id="RHEA:57888"/>
        <dbReference type="ChEBI" id="CHEBI:15378"/>
        <dbReference type="ChEBI" id="CHEBI:24646"/>
        <dbReference type="ChEBI" id="CHEBI:57540"/>
        <dbReference type="ChEBI" id="CHEBI:57945"/>
        <dbReference type="ChEBI" id="CHEBI:132124"/>
    </reaction>
</comment>
<comment type="cofactor">
    <cofactor evidence="1">
        <name>[4Fe-4S] cluster</name>
        <dbReference type="ChEBI" id="CHEBI:49883"/>
    </cofactor>
    <text evidence="1">Binds 2 [4Fe-4S] clusters per subunit.</text>
</comment>
<comment type="subunit">
    <text evidence="1">NDH-1 is composed of 14 different subunits. Subunits NuoA, H, J, K, L, M, N constitute the membrane sector of the complex.</text>
</comment>
<comment type="subcellular location">
    <subcellularLocation>
        <location evidence="1">Cell membrane</location>
        <topology evidence="1">Peripheral membrane protein</topology>
    </subcellularLocation>
</comment>
<comment type="similarity">
    <text evidence="1">Belongs to the complex I 23 kDa subunit family.</text>
</comment>
<feature type="chain" id="PRO_0000245719" description="NADH-quinone oxidoreductase subunit I 2">
    <location>
        <begin position="1"/>
        <end position="181"/>
    </location>
</feature>
<feature type="domain" description="4Fe-4S ferredoxin-type 1" evidence="1">
    <location>
        <begin position="44"/>
        <end position="74"/>
    </location>
</feature>
<feature type="domain" description="4Fe-4S ferredoxin-type 2" evidence="1">
    <location>
        <begin position="90"/>
        <end position="119"/>
    </location>
</feature>
<feature type="binding site" evidence="1">
    <location>
        <position position="54"/>
    </location>
    <ligand>
        <name>[4Fe-4S] cluster</name>
        <dbReference type="ChEBI" id="CHEBI:49883"/>
        <label>1</label>
    </ligand>
</feature>
<feature type="binding site" evidence="1">
    <location>
        <position position="57"/>
    </location>
    <ligand>
        <name>[4Fe-4S] cluster</name>
        <dbReference type="ChEBI" id="CHEBI:49883"/>
        <label>1</label>
    </ligand>
</feature>
<feature type="binding site" evidence="1">
    <location>
        <position position="60"/>
    </location>
    <ligand>
        <name>[4Fe-4S] cluster</name>
        <dbReference type="ChEBI" id="CHEBI:49883"/>
        <label>1</label>
    </ligand>
</feature>
<feature type="binding site" evidence="1">
    <location>
        <position position="64"/>
    </location>
    <ligand>
        <name>[4Fe-4S] cluster</name>
        <dbReference type="ChEBI" id="CHEBI:49883"/>
        <label>2</label>
    </ligand>
</feature>
<feature type="binding site" evidence="1">
    <location>
        <position position="99"/>
    </location>
    <ligand>
        <name>[4Fe-4S] cluster</name>
        <dbReference type="ChEBI" id="CHEBI:49883"/>
        <label>2</label>
    </ligand>
</feature>
<feature type="binding site" evidence="1">
    <location>
        <position position="102"/>
    </location>
    <ligand>
        <name>[4Fe-4S] cluster</name>
        <dbReference type="ChEBI" id="CHEBI:49883"/>
        <label>2</label>
    </ligand>
</feature>
<feature type="binding site" evidence="1">
    <location>
        <position position="105"/>
    </location>
    <ligand>
        <name>[4Fe-4S] cluster</name>
        <dbReference type="ChEBI" id="CHEBI:49883"/>
        <label>2</label>
    </ligand>
</feature>
<feature type="binding site" evidence="1">
    <location>
        <position position="109"/>
    </location>
    <ligand>
        <name>[4Fe-4S] cluster</name>
        <dbReference type="ChEBI" id="CHEBI:49883"/>
        <label>1</label>
    </ligand>
</feature>
<dbReference type="EC" id="7.1.1.-" evidence="1"/>
<dbReference type="EMBL" id="AE016958">
    <property type="protein sequence ID" value="AAS05757.1"/>
    <property type="molecule type" value="Genomic_DNA"/>
</dbReference>
<dbReference type="SMR" id="Q73V07"/>
<dbReference type="STRING" id="262316.MAP_3209"/>
<dbReference type="KEGG" id="mpa:MAP_3209"/>
<dbReference type="eggNOG" id="COG1143">
    <property type="taxonomic scope" value="Bacteria"/>
</dbReference>
<dbReference type="HOGENOM" id="CLU_067218_4_0_11"/>
<dbReference type="Proteomes" id="UP000000580">
    <property type="component" value="Chromosome"/>
</dbReference>
<dbReference type="GO" id="GO:0005886">
    <property type="term" value="C:plasma membrane"/>
    <property type="evidence" value="ECO:0007669"/>
    <property type="project" value="UniProtKB-SubCell"/>
</dbReference>
<dbReference type="GO" id="GO:0051539">
    <property type="term" value="F:4 iron, 4 sulfur cluster binding"/>
    <property type="evidence" value="ECO:0007669"/>
    <property type="project" value="UniProtKB-KW"/>
</dbReference>
<dbReference type="GO" id="GO:0005506">
    <property type="term" value="F:iron ion binding"/>
    <property type="evidence" value="ECO:0007669"/>
    <property type="project" value="UniProtKB-UniRule"/>
</dbReference>
<dbReference type="GO" id="GO:0050136">
    <property type="term" value="F:NADH:ubiquinone reductase (non-electrogenic) activity"/>
    <property type="evidence" value="ECO:0007669"/>
    <property type="project" value="UniProtKB-UniRule"/>
</dbReference>
<dbReference type="GO" id="GO:0048038">
    <property type="term" value="F:quinone binding"/>
    <property type="evidence" value="ECO:0007669"/>
    <property type="project" value="UniProtKB-KW"/>
</dbReference>
<dbReference type="GO" id="GO:0009060">
    <property type="term" value="P:aerobic respiration"/>
    <property type="evidence" value="ECO:0007669"/>
    <property type="project" value="TreeGrafter"/>
</dbReference>
<dbReference type="FunFam" id="3.30.70.3270:FF:000007">
    <property type="entry name" value="NADH-quinone oxidoreductase subunit I"/>
    <property type="match status" value="1"/>
</dbReference>
<dbReference type="Gene3D" id="3.30.70.3270">
    <property type="match status" value="1"/>
</dbReference>
<dbReference type="HAMAP" id="MF_01351">
    <property type="entry name" value="NDH1_NuoI"/>
    <property type="match status" value="1"/>
</dbReference>
<dbReference type="InterPro" id="IPR017896">
    <property type="entry name" value="4Fe4S_Fe-S-bd"/>
</dbReference>
<dbReference type="InterPro" id="IPR017900">
    <property type="entry name" value="4Fe4S_Fe_S_CS"/>
</dbReference>
<dbReference type="InterPro" id="IPR010226">
    <property type="entry name" value="NADH_quinone_OxRdtase_chainI"/>
</dbReference>
<dbReference type="NCBIfam" id="TIGR01971">
    <property type="entry name" value="NuoI"/>
    <property type="match status" value="1"/>
</dbReference>
<dbReference type="NCBIfam" id="NF004537">
    <property type="entry name" value="PRK05888.1-3"/>
    <property type="match status" value="1"/>
</dbReference>
<dbReference type="PANTHER" id="PTHR10849:SF20">
    <property type="entry name" value="NADH DEHYDROGENASE [UBIQUINONE] IRON-SULFUR PROTEIN 8, MITOCHONDRIAL"/>
    <property type="match status" value="1"/>
</dbReference>
<dbReference type="PANTHER" id="PTHR10849">
    <property type="entry name" value="NADH DEHYDROGENASE UBIQUINONE IRON-SULFUR PROTEIN 8, MITOCHONDRIAL"/>
    <property type="match status" value="1"/>
</dbReference>
<dbReference type="Pfam" id="PF12838">
    <property type="entry name" value="Fer4_7"/>
    <property type="match status" value="1"/>
</dbReference>
<dbReference type="SUPFAM" id="SSF54862">
    <property type="entry name" value="4Fe-4S ferredoxins"/>
    <property type="match status" value="1"/>
</dbReference>
<dbReference type="PROSITE" id="PS00198">
    <property type="entry name" value="4FE4S_FER_1"/>
    <property type="match status" value="2"/>
</dbReference>
<dbReference type="PROSITE" id="PS51379">
    <property type="entry name" value="4FE4S_FER_2"/>
    <property type="match status" value="2"/>
</dbReference>
<accession>Q73V07</accession>
<gene>
    <name evidence="1" type="primary">nuoI2</name>
    <name type="ordered locus">MAP_3209</name>
</gene>
<organism>
    <name type="scientific">Mycolicibacterium paratuberculosis (strain ATCC BAA-968 / K-10)</name>
    <name type="common">Mycobacterium paratuberculosis</name>
    <dbReference type="NCBI Taxonomy" id="262316"/>
    <lineage>
        <taxon>Bacteria</taxon>
        <taxon>Bacillati</taxon>
        <taxon>Actinomycetota</taxon>
        <taxon>Actinomycetes</taxon>
        <taxon>Mycobacteriales</taxon>
        <taxon>Mycobacteriaceae</taxon>
        <taxon>Mycobacterium</taxon>
        <taxon>Mycobacterium avium complex (MAC)</taxon>
    </lineage>
</organism>
<reference key="1">
    <citation type="journal article" date="2005" name="Proc. Natl. Acad. Sci. U.S.A.">
        <title>The complete genome sequence of Mycobacterium avium subspecies paratuberculosis.</title>
        <authorList>
            <person name="Li L."/>
            <person name="Bannantine J.P."/>
            <person name="Zhang Q."/>
            <person name="Amonsin A."/>
            <person name="May B.J."/>
            <person name="Alt D."/>
            <person name="Banerji N."/>
            <person name="Kanjilal S."/>
            <person name="Kapur V."/>
        </authorList>
    </citation>
    <scope>NUCLEOTIDE SEQUENCE [LARGE SCALE GENOMIC DNA]</scope>
    <source>
        <strain>ATCC BAA-968 / K-10</strain>
    </source>
</reference>
<protein>
    <recommendedName>
        <fullName evidence="1">NADH-quinone oxidoreductase subunit I 2</fullName>
        <ecNumber evidence="1">7.1.1.-</ecNumber>
    </recommendedName>
    <alternativeName>
        <fullName evidence="1">NADH dehydrogenase I subunit I 2</fullName>
    </alternativeName>
    <alternativeName>
        <fullName evidence="1">NDH-1 subunit I 2</fullName>
    </alternativeName>
</protein>
<keyword id="KW-0004">4Fe-4S</keyword>
<keyword id="KW-1003">Cell membrane</keyword>
<keyword id="KW-0408">Iron</keyword>
<keyword id="KW-0411">Iron-sulfur</keyword>
<keyword id="KW-0472">Membrane</keyword>
<keyword id="KW-0479">Metal-binding</keyword>
<keyword id="KW-0520">NAD</keyword>
<keyword id="KW-0874">Quinone</keyword>
<keyword id="KW-1185">Reference proteome</keyword>
<keyword id="KW-0677">Repeat</keyword>
<keyword id="KW-1278">Translocase</keyword>
<name>NUOI2_MYCPA</name>
<sequence>MAKFLDAVAGFGVTFASMFKKHVTEEYPEKPGPVAPRYHGRHQLNRYPDGLEKCIGCELCAWACPADAIYVEGADNTEELRYSPGERYGRVYQINYLRCIGCGLCVEACPTRALTMTNDYEMADDNRADLIYEKDRLLAPLLPEMTAPPHPRAPGATDKDYYLGNVTAHGLREAQRAGEPR</sequence>
<evidence type="ECO:0000255" key="1">
    <source>
        <dbReference type="HAMAP-Rule" id="MF_01351"/>
    </source>
</evidence>